<gene>
    <name evidence="1" type="primary">argR</name>
    <name type="ordered locus">lmo1367</name>
</gene>
<keyword id="KW-0028">Amino-acid biosynthesis</keyword>
<keyword id="KW-0055">Arginine biosynthesis</keyword>
<keyword id="KW-0963">Cytoplasm</keyword>
<keyword id="KW-0238">DNA-binding</keyword>
<keyword id="KW-1185">Reference proteome</keyword>
<keyword id="KW-0678">Repressor</keyword>
<keyword id="KW-0804">Transcription</keyword>
<keyword id="KW-0805">Transcription regulation</keyword>
<proteinExistence type="inferred from homology"/>
<comment type="function">
    <text evidence="1">Regulates arginine biosynthesis genes.</text>
</comment>
<comment type="pathway">
    <text>Amino-acid biosynthesis; L-arginine biosynthesis [regulation].</text>
</comment>
<comment type="subcellular location">
    <subcellularLocation>
        <location evidence="1">Cytoplasm</location>
    </subcellularLocation>
</comment>
<comment type="similarity">
    <text evidence="1">Belongs to the ArgR family.</text>
</comment>
<organism>
    <name type="scientific">Listeria monocytogenes serovar 1/2a (strain ATCC BAA-679 / EGD-e)</name>
    <dbReference type="NCBI Taxonomy" id="169963"/>
    <lineage>
        <taxon>Bacteria</taxon>
        <taxon>Bacillati</taxon>
        <taxon>Bacillota</taxon>
        <taxon>Bacilli</taxon>
        <taxon>Bacillales</taxon>
        <taxon>Listeriaceae</taxon>
        <taxon>Listeria</taxon>
    </lineage>
</organism>
<accession>Q8Y7B9</accession>
<feature type="chain" id="PRO_0000205099" description="Arginine repressor">
    <location>
        <begin position="1"/>
        <end position="149"/>
    </location>
</feature>
<dbReference type="EMBL" id="AL591978">
    <property type="protein sequence ID" value="CAC99445.1"/>
    <property type="molecule type" value="Genomic_DNA"/>
</dbReference>
<dbReference type="PIR" id="AG1245">
    <property type="entry name" value="AG1245"/>
</dbReference>
<dbReference type="RefSeq" id="NP_464892.1">
    <property type="nucleotide sequence ID" value="NC_003210.1"/>
</dbReference>
<dbReference type="RefSeq" id="WP_003722493.1">
    <property type="nucleotide sequence ID" value="NZ_CP149495.1"/>
</dbReference>
<dbReference type="SMR" id="Q8Y7B9"/>
<dbReference type="STRING" id="169963.gene:17594024"/>
<dbReference type="PaxDb" id="169963-lmo1367"/>
<dbReference type="DNASU" id="987665"/>
<dbReference type="EnsemblBacteria" id="CAC99445">
    <property type="protein sequence ID" value="CAC99445"/>
    <property type="gene ID" value="CAC99445"/>
</dbReference>
<dbReference type="GeneID" id="93239243"/>
<dbReference type="GeneID" id="987665"/>
<dbReference type="KEGG" id="lmo:lmo1367"/>
<dbReference type="PATRIC" id="fig|169963.11.peg.1404"/>
<dbReference type="eggNOG" id="COG1438">
    <property type="taxonomic scope" value="Bacteria"/>
</dbReference>
<dbReference type="HOGENOM" id="CLU_097103_3_0_9"/>
<dbReference type="OrthoDB" id="9807089at2"/>
<dbReference type="PhylomeDB" id="Q8Y7B9"/>
<dbReference type="BioCyc" id="LMON169963:LMO1367-MONOMER"/>
<dbReference type="UniPathway" id="UPA00068"/>
<dbReference type="Proteomes" id="UP000000817">
    <property type="component" value="Chromosome"/>
</dbReference>
<dbReference type="GO" id="GO:0005737">
    <property type="term" value="C:cytoplasm"/>
    <property type="evidence" value="ECO:0007669"/>
    <property type="project" value="UniProtKB-SubCell"/>
</dbReference>
<dbReference type="GO" id="GO:0005667">
    <property type="term" value="C:transcription regulator complex"/>
    <property type="evidence" value="ECO:0000318"/>
    <property type="project" value="GO_Central"/>
</dbReference>
<dbReference type="GO" id="GO:0034618">
    <property type="term" value="F:arginine binding"/>
    <property type="evidence" value="ECO:0007669"/>
    <property type="project" value="InterPro"/>
</dbReference>
<dbReference type="GO" id="GO:0000987">
    <property type="term" value="F:cis-regulatory region sequence-specific DNA binding"/>
    <property type="evidence" value="ECO:0000318"/>
    <property type="project" value="GO_Central"/>
</dbReference>
<dbReference type="GO" id="GO:0003700">
    <property type="term" value="F:DNA-binding transcription factor activity"/>
    <property type="evidence" value="ECO:0007669"/>
    <property type="project" value="UniProtKB-UniRule"/>
</dbReference>
<dbReference type="GO" id="GO:0006526">
    <property type="term" value="P:L-arginine biosynthetic process"/>
    <property type="evidence" value="ECO:0007669"/>
    <property type="project" value="UniProtKB-UniPathway"/>
</dbReference>
<dbReference type="GO" id="GO:0051259">
    <property type="term" value="P:protein complex oligomerization"/>
    <property type="evidence" value="ECO:0007669"/>
    <property type="project" value="InterPro"/>
</dbReference>
<dbReference type="GO" id="GO:1900079">
    <property type="term" value="P:regulation of arginine biosynthetic process"/>
    <property type="evidence" value="ECO:0007669"/>
    <property type="project" value="UniProtKB-UniRule"/>
</dbReference>
<dbReference type="GO" id="GO:0000821">
    <property type="term" value="P:regulation of arginine metabolic process"/>
    <property type="evidence" value="ECO:0000318"/>
    <property type="project" value="GO_Central"/>
</dbReference>
<dbReference type="Gene3D" id="3.30.1360.40">
    <property type="match status" value="1"/>
</dbReference>
<dbReference type="Gene3D" id="1.10.10.10">
    <property type="entry name" value="Winged helix-like DNA-binding domain superfamily/Winged helix DNA-binding domain"/>
    <property type="match status" value="1"/>
</dbReference>
<dbReference type="HAMAP" id="MF_00173">
    <property type="entry name" value="Arg_repressor"/>
    <property type="match status" value="1"/>
</dbReference>
<dbReference type="InterPro" id="IPR001669">
    <property type="entry name" value="Arg_repress"/>
</dbReference>
<dbReference type="InterPro" id="IPR020899">
    <property type="entry name" value="Arg_repress_C"/>
</dbReference>
<dbReference type="InterPro" id="IPR036251">
    <property type="entry name" value="Arg_repress_C_sf"/>
</dbReference>
<dbReference type="InterPro" id="IPR020900">
    <property type="entry name" value="Arg_repress_DNA-bd"/>
</dbReference>
<dbReference type="InterPro" id="IPR036388">
    <property type="entry name" value="WH-like_DNA-bd_sf"/>
</dbReference>
<dbReference type="InterPro" id="IPR036390">
    <property type="entry name" value="WH_DNA-bd_sf"/>
</dbReference>
<dbReference type="NCBIfam" id="TIGR01529">
    <property type="entry name" value="argR_whole"/>
    <property type="match status" value="1"/>
</dbReference>
<dbReference type="NCBIfam" id="NF003281">
    <property type="entry name" value="PRK04280.1"/>
    <property type="match status" value="1"/>
</dbReference>
<dbReference type="PANTHER" id="PTHR34471">
    <property type="entry name" value="ARGININE REPRESSOR"/>
    <property type="match status" value="1"/>
</dbReference>
<dbReference type="PANTHER" id="PTHR34471:SF1">
    <property type="entry name" value="ARGININE REPRESSOR"/>
    <property type="match status" value="1"/>
</dbReference>
<dbReference type="Pfam" id="PF01316">
    <property type="entry name" value="Arg_repressor"/>
    <property type="match status" value="1"/>
</dbReference>
<dbReference type="Pfam" id="PF02863">
    <property type="entry name" value="Arg_repressor_C"/>
    <property type="match status" value="1"/>
</dbReference>
<dbReference type="PRINTS" id="PR01467">
    <property type="entry name" value="ARGREPRESSOR"/>
</dbReference>
<dbReference type="SUPFAM" id="SSF55252">
    <property type="entry name" value="C-terminal domain of arginine repressor"/>
    <property type="match status" value="1"/>
</dbReference>
<dbReference type="SUPFAM" id="SSF46785">
    <property type="entry name" value="Winged helix' DNA-binding domain"/>
    <property type="match status" value="1"/>
</dbReference>
<name>ARGR_LISMO</name>
<protein>
    <recommendedName>
        <fullName evidence="1">Arginine repressor</fullName>
    </recommendedName>
</protein>
<sequence>MNKGHRHIIIRELITSNEIDTQEDLVELLLERDVKVTQATVSRDIKELHLVKVPTQTGGYKYSLPADNSFNPHQKLKRALIDCFIGIDNVQFMIILKVMPGNGNSVGALIDNLDWPEKAGTICGDDTCLIICRSEENAKTLTDRFIDML</sequence>
<reference key="1">
    <citation type="journal article" date="2001" name="Science">
        <title>Comparative genomics of Listeria species.</title>
        <authorList>
            <person name="Glaser P."/>
            <person name="Frangeul L."/>
            <person name="Buchrieser C."/>
            <person name="Rusniok C."/>
            <person name="Amend A."/>
            <person name="Baquero F."/>
            <person name="Berche P."/>
            <person name="Bloecker H."/>
            <person name="Brandt P."/>
            <person name="Chakraborty T."/>
            <person name="Charbit A."/>
            <person name="Chetouani F."/>
            <person name="Couve E."/>
            <person name="de Daruvar A."/>
            <person name="Dehoux P."/>
            <person name="Domann E."/>
            <person name="Dominguez-Bernal G."/>
            <person name="Duchaud E."/>
            <person name="Durant L."/>
            <person name="Dussurget O."/>
            <person name="Entian K.-D."/>
            <person name="Fsihi H."/>
            <person name="Garcia-del Portillo F."/>
            <person name="Garrido P."/>
            <person name="Gautier L."/>
            <person name="Goebel W."/>
            <person name="Gomez-Lopez N."/>
            <person name="Hain T."/>
            <person name="Hauf J."/>
            <person name="Jackson D."/>
            <person name="Jones L.-M."/>
            <person name="Kaerst U."/>
            <person name="Kreft J."/>
            <person name="Kuhn M."/>
            <person name="Kunst F."/>
            <person name="Kurapkat G."/>
            <person name="Madueno E."/>
            <person name="Maitournam A."/>
            <person name="Mata Vicente J."/>
            <person name="Ng E."/>
            <person name="Nedjari H."/>
            <person name="Nordsiek G."/>
            <person name="Novella S."/>
            <person name="de Pablos B."/>
            <person name="Perez-Diaz J.-C."/>
            <person name="Purcell R."/>
            <person name="Remmel B."/>
            <person name="Rose M."/>
            <person name="Schlueter T."/>
            <person name="Simoes N."/>
            <person name="Tierrez A."/>
            <person name="Vazquez-Boland J.-A."/>
            <person name="Voss H."/>
            <person name="Wehland J."/>
            <person name="Cossart P."/>
        </authorList>
    </citation>
    <scope>NUCLEOTIDE SEQUENCE [LARGE SCALE GENOMIC DNA]</scope>
    <source>
        <strain>ATCC BAA-679 / EGD-e</strain>
    </source>
</reference>
<evidence type="ECO:0000255" key="1">
    <source>
        <dbReference type="HAMAP-Rule" id="MF_00173"/>
    </source>
</evidence>